<keyword id="KW-0058">Aromatic hydrocarbons catabolism</keyword>
<keyword id="KW-0903">Direct protein sequencing</keyword>
<keyword id="KW-0456">Lyase</keyword>
<sequence length="57" mass="6619">MTTCKDCAFFFSIPEDADDFEKSKGDCVTQKDDEKGRYWLSKPVFENDQCCGAFHKR</sequence>
<proteinExistence type="evidence at protein level"/>
<protein>
    <recommendedName>
        <fullName>Benzylsuccinate synthase gamma subunit</fullName>
        <ecNumber>4.1.99.11</ecNumber>
    </recommendedName>
    <component>
        <recommendedName>
            <fullName>Benzylsuccinate synthase gamma subunit, N-terminally processed</fullName>
        </recommendedName>
    </component>
</protein>
<gene>
    <name type="primary">bssC</name>
</gene>
<accession>O87942</accession>
<comment type="function">
    <text evidence="2">Catalyzes the addition of fumarate to the methyl group of toluene, leading to the formation of benzylsuccinate.</text>
</comment>
<comment type="catalytic activity">
    <reaction evidence="2">
        <text>toluene + fumarate = 2-benzylsuccinate</text>
        <dbReference type="Rhea" id="RHEA:10416"/>
        <dbReference type="ChEBI" id="CHEBI:17578"/>
        <dbReference type="ChEBI" id="CHEBI:29806"/>
        <dbReference type="ChEBI" id="CHEBI:57621"/>
        <dbReference type="EC" id="4.1.99.11"/>
    </reaction>
</comment>
<comment type="activity regulation">
    <text evidence="2">Activated by the benzylsuccinate synthase activating enzyme BssD. Rapidly inactivated by oxygen.</text>
</comment>
<comment type="biophysicochemical properties">
    <phDependence>
        <text evidence="2">Optimum pH is 8.0.</text>
    </phDependence>
</comment>
<comment type="pathway">
    <text evidence="2">Xenobiotic degradation; toluene degradation.</text>
</comment>
<comment type="subunit">
    <text evidence="2">Heterohexamer composed of 2 alpha subunits, 2 beta subunits and 2 gamma subunits.</text>
</comment>
<comment type="induction">
    <text evidence="1 2 3">Induced by toluene, probably via the TdiR/TdiS two-component regulatory system.</text>
</comment>
<name>BSSC_THAAR</name>
<reference key="1">
    <citation type="journal article" date="1998" name="Mol. Microbiol.">
        <title>Biochemical and genetic characterization of benzylsuccinate synthase from Thauera aromatica: a new glycyl radical enzyme catalysing the first step in anaerobic toluene metabolism.</title>
        <authorList>
            <person name="Leuthner B."/>
            <person name="Leutwein C."/>
            <person name="Schulz H."/>
            <person name="Horth P."/>
            <person name="Haehnel W."/>
            <person name="Schiltz E."/>
            <person name="Schagger H."/>
            <person name="Heider J."/>
        </authorList>
    </citation>
    <scope>NUCLEOTIDE SEQUENCE [GENOMIC DNA]</scope>
    <scope>PARTIAL PROTEIN SEQUENCE</scope>
    <scope>FUNCTION</scope>
    <scope>CATALYTIC ACTIVITY</scope>
    <scope>ACTIVITY REGULATION</scope>
    <scope>BIOPHYSICOCHEMICAL PROPERTIES</scope>
    <scope>PATHWAY</scope>
    <scope>SUBUNIT</scope>
    <scope>INDUCTION</scope>
    <source>
        <strain>DSM 6984 / CIP 107765 / K172</strain>
    </source>
</reference>
<reference key="2">
    <citation type="journal article" date="1998" name="FEMS Microbiol. Lett.">
        <title>A two-component system involved in regulation of anaerobic toluene metabolism in Thauera aromatica.</title>
        <authorList>
            <person name="Leuthner B."/>
            <person name="Heider J."/>
        </authorList>
    </citation>
    <scope>INDUCTION</scope>
    <source>
        <strain>DSM 6984 / CIP 107765 / K172</strain>
    </source>
</reference>
<reference key="3">
    <citation type="journal article" date="2002" name="Arch. Microbiol.">
        <title>Operon structure and expression of the genes for benzylsuccinate synthase in Thauera aromatica strain K172.</title>
        <authorList>
            <person name="Hermuth K."/>
            <person name="Leuthner B."/>
            <person name="Heider J."/>
        </authorList>
    </citation>
    <scope>INDUCTION</scope>
    <source>
        <strain>DSM 6984 / CIP 107765 / K172</strain>
    </source>
</reference>
<evidence type="ECO:0000269" key="1">
    <source>
    </source>
</evidence>
<evidence type="ECO:0000269" key="2">
    <source>
    </source>
</evidence>
<evidence type="ECO:0000269" key="3">
    <source>
    </source>
</evidence>
<organism>
    <name type="scientific">Thauera aromatica</name>
    <dbReference type="NCBI Taxonomy" id="59405"/>
    <lineage>
        <taxon>Bacteria</taxon>
        <taxon>Pseudomonadati</taxon>
        <taxon>Pseudomonadota</taxon>
        <taxon>Betaproteobacteria</taxon>
        <taxon>Rhodocyclales</taxon>
        <taxon>Zoogloeaceae</taxon>
        <taxon>Thauera</taxon>
    </lineage>
</organism>
<dbReference type="EC" id="4.1.99.11"/>
<dbReference type="EMBL" id="AJ001848">
    <property type="protein sequence ID" value="CAA05051.1"/>
    <property type="molecule type" value="Genomic_DNA"/>
</dbReference>
<dbReference type="SMR" id="O87942"/>
<dbReference type="KEGG" id="ag:CAA05051"/>
<dbReference type="BioCyc" id="MetaCyc:MONOMER-672"/>
<dbReference type="BRENDA" id="4.1.99.11">
    <property type="organism ID" value="6271"/>
</dbReference>
<dbReference type="UniPathway" id="UPA00273"/>
<dbReference type="GO" id="GO:0018805">
    <property type="term" value="F:benzylsuccinate synthase activity"/>
    <property type="evidence" value="ECO:0007669"/>
    <property type="project" value="UniProtKB-EC"/>
</dbReference>
<dbReference type="GO" id="GO:0042203">
    <property type="term" value="P:toluene catabolic process"/>
    <property type="evidence" value="ECO:0007669"/>
    <property type="project" value="UniProtKB-UniPathway"/>
</dbReference>
<dbReference type="Gene3D" id="6.20.90.20">
    <property type="entry name" value="Benzylsuccinate synthase gamma subunit"/>
    <property type="match status" value="1"/>
</dbReference>
<dbReference type="InterPro" id="IPR013161">
    <property type="entry name" value="BssC"/>
</dbReference>
<dbReference type="InterPro" id="IPR038640">
    <property type="entry name" value="BssC_sf"/>
</dbReference>
<dbReference type="Pfam" id="PF08201">
    <property type="entry name" value="BssC_TutF"/>
    <property type="match status" value="1"/>
</dbReference>
<feature type="chain" id="PRO_0000418874" description="Benzylsuccinate synthase gamma subunit">
    <location>
        <begin position="1"/>
        <end position="57"/>
    </location>
</feature>
<feature type="initiator methionine" description="Removed; alternate">
    <location>
        <position position="1"/>
    </location>
</feature>
<feature type="chain" id="PRO_0000418875" description="Benzylsuccinate synthase gamma subunit, N-terminally processed">
    <location>
        <begin position="2"/>
        <end position="57"/>
    </location>
</feature>